<organism>
    <name type="scientific">Granulibacter bethesdensis (strain ATCC BAA-1260 / CGDNIH1)</name>
    <dbReference type="NCBI Taxonomy" id="391165"/>
    <lineage>
        <taxon>Bacteria</taxon>
        <taxon>Pseudomonadati</taxon>
        <taxon>Pseudomonadota</taxon>
        <taxon>Alphaproteobacteria</taxon>
        <taxon>Acetobacterales</taxon>
        <taxon>Acetobacteraceae</taxon>
        <taxon>Granulibacter</taxon>
    </lineage>
</organism>
<keyword id="KW-0378">Hydrolase</keyword>
<keyword id="KW-0546">Nucleotide metabolism</keyword>
<keyword id="KW-0547">Nucleotide-binding</keyword>
<keyword id="KW-1185">Reference proteome</keyword>
<dbReference type="EC" id="3.5.4.13" evidence="1"/>
<dbReference type="EMBL" id="CP000394">
    <property type="protein sequence ID" value="ABI61936.1"/>
    <property type="molecule type" value="Genomic_DNA"/>
</dbReference>
<dbReference type="RefSeq" id="WP_011631744.1">
    <property type="nucleotide sequence ID" value="NC_008343.2"/>
</dbReference>
<dbReference type="SMR" id="Q0BTB7"/>
<dbReference type="STRING" id="391165.GbCGDNIH1_1038"/>
<dbReference type="KEGG" id="gbe:GbCGDNIH1_1038"/>
<dbReference type="eggNOG" id="COG0717">
    <property type="taxonomic scope" value="Bacteria"/>
</dbReference>
<dbReference type="HOGENOM" id="CLU_087476_4_0_5"/>
<dbReference type="OrthoDB" id="9780956at2"/>
<dbReference type="UniPathway" id="UPA00610">
    <property type="reaction ID" value="UER00665"/>
</dbReference>
<dbReference type="Proteomes" id="UP000001963">
    <property type="component" value="Chromosome"/>
</dbReference>
<dbReference type="GO" id="GO:0008829">
    <property type="term" value="F:dCTP deaminase activity"/>
    <property type="evidence" value="ECO:0007669"/>
    <property type="project" value="UniProtKB-UniRule"/>
</dbReference>
<dbReference type="GO" id="GO:0000166">
    <property type="term" value="F:nucleotide binding"/>
    <property type="evidence" value="ECO:0007669"/>
    <property type="project" value="UniProtKB-KW"/>
</dbReference>
<dbReference type="GO" id="GO:0006226">
    <property type="term" value="P:dUMP biosynthetic process"/>
    <property type="evidence" value="ECO:0007669"/>
    <property type="project" value="UniProtKB-UniPathway"/>
</dbReference>
<dbReference type="GO" id="GO:0006229">
    <property type="term" value="P:dUTP biosynthetic process"/>
    <property type="evidence" value="ECO:0007669"/>
    <property type="project" value="UniProtKB-UniRule"/>
</dbReference>
<dbReference type="CDD" id="cd07557">
    <property type="entry name" value="trimeric_dUTPase"/>
    <property type="match status" value="1"/>
</dbReference>
<dbReference type="FunFam" id="2.70.40.10:FF:000001">
    <property type="entry name" value="dCTP deaminase"/>
    <property type="match status" value="1"/>
</dbReference>
<dbReference type="Gene3D" id="2.70.40.10">
    <property type="match status" value="1"/>
</dbReference>
<dbReference type="HAMAP" id="MF_00146">
    <property type="entry name" value="dCTP_deaminase"/>
    <property type="match status" value="1"/>
</dbReference>
<dbReference type="InterPro" id="IPR011962">
    <property type="entry name" value="dCTP_deaminase"/>
</dbReference>
<dbReference type="InterPro" id="IPR036157">
    <property type="entry name" value="dUTPase-like_sf"/>
</dbReference>
<dbReference type="InterPro" id="IPR033704">
    <property type="entry name" value="dUTPase_trimeric"/>
</dbReference>
<dbReference type="NCBIfam" id="TIGR02274">
    <property type="entry name" value="dCTP_deam"/>
    <property type="match status" value="1"/>
</dbReference>
<dbReference type="PANTHER" id="PTHR42680">
    <property type="entry name" value="DCTP DEAMINASE"/>
    <property type="match status" value="1"/>
</dbReference>
<dbReference type="PANTHER" id="PTHR42680:SF3">
    <property type="entry name" value="DCTP DEAMINASE"/>
    <property type="match status" value="1"/>
</dbReference>
<dbReference type="Pfam" id="PF22769">
    <property type="entry name" value="DCD"/>
    <property type="match status" value="1"/>
</dbReference>
<dbReference type="SUPFAM" id="SSF51283">
    <property type="entry name" value="dUTPase-like"/>
    <property type="match status" value="1"/>
</dbReference>
<name>DCD_GRABC</name>
<sequence length="184" mass="20391">MSIMPDHWIRQMATGHGMIEPFVETQKRDGVISYGLSSYGYDARVADEFKIFTNVDSAVVDPKAFSPASFVDRKGPVCIIPPNSFALAHTVEYFRIPRNVLVICLGKSTYARCGIIVNVTPLEPEWEGQVTIEISNTTPLPARIYAGEGICQFLFLRGDSDCETSYADKAGKYMGQRGVSLPRM</sequence>
<comment type="function">
    <text evidence="1">Catalyzes the deamination of dCTP to dUTP.</text>
</comment>
<comment type="catalytic activity">
    <reaction evidence="1">
        <text>dCTP + H2O + H(+) = dUTP + NH4(+)</text>
        <dbReference type="Rhea" id="RHEA:22680"/>
        <dbReference type="ChEBI" id="CHEBI:15377"/>
        <dbReference type="ChEBI" id="CHEBI:15378"/>
        <dbReference type="ChEBI" id="CHEBI:28938"/>
        <dbReference type="ChEBI" id="CHEBI:61481"/>
        <dbReference type="ChEBI" id="CHEBI:61555"/>
        <dbReference type="EC" id="3.5.4.13"/>
    </reaction>
</comment>
<comment type="pathway">
    <text evidence="1">Pyrimidine metabolism; dUMP biosynthesis; dUMP from dCTP (dUTP route): step 1/2.</text>
</comment>
<comment type="subunit">
    <text evidence="1">Homotrimer.</text>
</comment>
<comment type="similarity">
    <text evidence="1">Belongs to the dCTP deaminase family.</text>
</comment>
<proteinExistence type="inferred from homology"/>
<feature type="chain" id="PRO_1000009731" description="dCTP deaminase">
    <location>
        <begin position="1"/>
        <end position="184"/>
    </location>
</feature>
<feature type="active site" description="Proton donor/acceptor" evidence="1">
    <location>
        <position position="133"/>
    </location>
</feature>
<feature type="binding site" evidence="1">
    <location>
        <begin position="107"/>
        <end position="112"/>
    </location>
    <ligand>
        <name>dCTP</name>
        <dbReference type="ChEBI" id="CHEBI:61481"/>
    </ligand>
</feature>
<feature type="binding site" evidence="1">
    <location>
        <position position="152"/>
    </location>
    <ligand>
        <name>dCTP</name>
        <dbReference type="ChEBI" id="CHEBI:61481"/>
    </ligand>
</feature>
<feature type="binding site" evidence="1">
    <location>
        <position position="166"/>
    </location>
    <ligand>
        <name>dCTP</name>
        <dbReference type="ChEBI" id="CHEBI:61481"/>
    </ligand>
</feature>
<feature type="binding site" evidence="1">
    <location>
        <position position="176"/>
    </location>
    <ligand>
        <name>dCTP</name>
        <dbReference type="ChEBI" id="CHEBI:61481"/>
    </ligand>
</feature>
<protein>
    <recommendedName>
        <fullName evidence="1">dCTP deaminase</fullName>
        <ecNumber evidence="1">3.5.4.13</ecNumber>
    </recommendedName>
    <alternativeName>
        <fullName evidence="1">Deoxycytidine triphosphate deaminase</fullName>
    </alternativeName>
</protein>
<accession>Q0BTB7</accession>
<gene>
    <name evidence="1" type="primary">dcd</name>
    <name type="ordered locus">GbCGDNIH1_1038</name>
</gene>
<evidence type="ECO:0000255" key="1">
    <source>
        <dbReference type="HAMAP-Rule" id="MF_00146"/>
    </source>
</evidence>
<reference key="1">
    <citation type="journal article" date="2007" name="J. Bacteriol.">
        <title>Genome sequence analysis of the emerging human pathogenic acetic acid bacterium Granulibacter bethesdensis.</title>
        <authorList>
            <person name="Greenberg D.E."/>
            <person name="Porcella S.F."/>
            <person name="Zelazny A.M."/>
            <person name="Virtaneva K."/>
            <person name="Sturdevant D.E."/>
            <person name="Kupko J.J. III"/>
            <person name="Barbian K.D."/>
            <person name="Babar A."/>
            <person name="Dorward D.W."/>
            <person name="Holland S.M."/>
        </authorList>
    </citation>
    <scope>NUCLEOTIDE SEQUENCE [LARGE SCALE GENOMIC DNA]</scope>
    <source>
        <strain>ATCC BAA-1260 / CGDNIH1</strain>
    </source>
</reference>